<proteinExistence type="inferred from homology"/>
<gene>
    <name type="primary">CRRSP17</name>
    <name type="ordered locus">At3g21910</name>
    <name type="ORF">MZN24.3</name>
</gene>
<protein>
    <recommendedName>
        <fullName>Putative cysteine-rich repeat secretory protein 17</fullName>
    </recommendedName>
</protein>
<feature type="signal peptide" evidence="1">
    <location>
        <begin position="1"/>
        <end position="32"/>
    </location>
</feature>
<feature type="chain" id="PRO_0000296145" description="Putative cysteine-rich repeat secretory protein 17">
    <location>
        <begin position="33"/>
        <end position="278"/>
    </location>
</feature>
<feature type="domain" description="Gnk2-homologous 1" evidence="2">
    <location>
        <begin position="39"/>
        <end position="142"/>
    </location>
</feature>
<feature type="domain" description="Gnk2-homologous 2" evidence="2">
    <location>
        <begin position="148"/>
        <end position="265"/>
    </location>
</feature>
<dbReference type="EMBL" id="AB028622">
    <property type="protein sequence ID" value="BAB01368.1"/>
    <property type="molecule type" value="Genomic_DNA"/>
</dbReference>
<dbReference type="EMBL" id="CP002686">
    <property type="protein sequence ID" value="AEE76565.1"/>
    <property type="molecule type" value="Genomic_DNA"/>
</dbReference>
<dbReference type="RefSeq" id="NP_188829.1">
    <property type="nucleotide sequence ID" value="NM_113087.2"/>
</dbReference>
<dbReference type="SMR" id="Q9LRM2"/>
<dbReference type="STRING" id="3702.Q9LRM2"/>
<dbReference type="PaxDb" id="3702-AT3G21910.1"/>
<dbReference type="ProteomicsDB" id="224549"/>
<dbReference type="EnsemblPlants" id="AT3G21910.1">
    <property type="protein sequence ID" value="AT3G21910.1"/>
    <property type="gene ID" value="AT3G21910"/>
</dbReference>
<dbReference type="GeneID" id="821746"/>
<dbReference type="Gramene" id="AT3G21910.1">
    <property type="protein sequence ID" value="AT3G21910.1"/>
    <property type="gene ID" value="AT3G21910"/>
</dbReference>
<dbReference type="KEGG" id="ath:AT3G21910"/>
<dbReference type="Araport" id="AT3G21910"/>
<dbReference type="TAIR" id="AT3G21910"/>
<dbReference type="eggNOG" id="ENOG502QPWH">
    <property type="taxonomic scope" value="Eukaryota"/>
</dbReference>
<dbReference type="HOGENOM" id="CLU_000288_35_0_1"/>
<dbReference type="InParanoid" id="Q9LRM2"/>
<dbReference type="OMA" id="FIITWNT"/>
<dbReference type="PhylomeDB" id="Q9LRM2"/>
<dbReference type="PRO" id="PR:Q9LRM2"/>
<dbReference type="Proteomes" id="UP000006548">
    <property type="component" value="Chromosome 3"/>
</dbReference>
<dbReference type="ExpressionAtlas" id="Q9LRM2">
    <property type="expression patterns" value="baseline"/>
</dbReference>
<dbReference type="GO" id="GO:0005576">
    <property type="term" value="C:extracellular region"/>
    <property type="evidence" value="ECO:0007669"/>
    <property type="project" value="UniProtKB-SubCell"/>
</dbReference>
<dbReference type="CDD" id="cd23509">
    <property type="entry name" value="Gnk2-like"/>
    <property type="match status" value="2"/>
</dbReference>
<dbReference type="Gene3D" id="3.30.430.20">
    <property type="entry name" value="Gnk2 domain, C-X8-C-X2-C motif"/>
    <property type="match status" value="2"/>
</dbReference>
<dbReference type="InterPro" id="IPR050581">
    <property type="entry name" value="CRR_secretory_protein"/>
</dbReference>
<dbReference type="InterPro" id="IPR002902">
    <property type="entry name" value="GNK2"/>
</dbReference>
<dbReference type="InterPro" id="IPR038408">
    <property type="entry name" value="GNK2_sf"/>
</dbReference>
<dbReference type="PANTHER" id="PTHR32411:SF53">
    <property type="entry name" value="CYSTEINE-RICH REPEAT SECRETORY PROTEIN 18-RELATED"/>
    <property type="match status" value="1"/>
</dbReference>
<dbReference type="PANTHER" id="PTHR32411">
    <property type="entry name" value="CYSTEINE-RICH REPEAT SECRETORY PROTEIN 38-RELATED"/>
    <property type="match status" value="1"/>
</dbReference>
<dbReference type="Pfam" id="PF01657">
    <property type="entry name" value="Stress-antifung"/>
    <property type="match status" value="2"/>
</dbReference>
<dbReference type="PROSITE" id="PS51473">
    <property type="entry name" value="GNK2"/>
    <property type="match status" value="2"/>
</dbReference>
<evidence type="ECO:0000255" key="1"/>
<evidence type="ECO:0000255" key="2">
    <source>
        <dbReference type="PROSITE-ProRule" id="PRU00806"/>
    </source>
</evidence>
<evidence type="ECO:0000305" key="3"/>
<sequence>MYSLSSVSKHLILVHILALVATQLLLIRSVSSLNMTNSYLNHKCFVSQGKYKPGSAHEKSLEAIIHSISVGENVNSGYDMMSFGDGPDLVCVVLQCRGDSYGSKCRSCFASAMAGLRRRCPRYKGGIIWFDQCLLEISSIDNVGQLNYGDSFCMSNAKNVGDDPFSFILKWDTLFDNISRIAITEKNKNLKDTNKPALYGAGEKRLGTKKKMYGMVQCTDDLSVKACEECLVANILKFQNCWKSGKRGARVLDRSCNFRYELYPFVNAKTGPNSYFKS</sequence>
<name>CRR17_ARATH</name>
<accession>Q9LRM2</accession>
<keyword id="KW-1185">Reference proteome</keyword>
<keyword id="KW-0677">Repeat</keyword>
<keyword id="KW-0964">Secreted</keyword>
<keyword id="KW-0732">Signal</keyword>
<organism>
    <name type="scientific">Arabidopsis thaliana</name>
    <name type="common">Mouse-ear cress</name>
    <dbReference type="NCBI Taxonomy" id="3702"/>
    <lineage>
        <taxon>Eukaryota</taxon>
        <taxon>Viridiplantae</taxon>
        <taxon>Streptophyta</taxon>
        <taxon>Embryophyta</taxon>
        <taxon>Tracheophyta</taxon>
        <taxon>Spermatophyta</taxon>
        <taxon>Magnoliopsida</taxon>
        <taxon>eudicotyledons</taxon>
        <taxon>Gunneridae</taxon>
        <taxon>Pentapetalae</taxon>
        <taxon>rosids</taxon>
        <taxon>malvids</taxon>
        <taxon>Brassicales</taxon>
        <taxon>Brassicaceae</taxon>
        <taxon>Camelineae</taxon>
        <taxon>Arabidopsis</taxon>
    </lineage>
</organism>
<comment type="subcellular location">
    <subcellularLocation>
        <location evidence="3">Secreted</location>
    </subcellularLocation>
</comment>
<comment type="similarity">
    <text evidence="3">Belongs to the cysteine-rich repeat secretory protein family.</text>
</comment>
<reference key="1">
    <citation type="journal article" date="2000" name="DNA Res.">
        <title>Structural analysis of Arabidopsis thaliana chromosome 3. I. Sequence features of the regions of 4,504,864 bp covered by sixty P1 and TAC clones.</title>
        <authorList>
            <person name="Sato S."/>
            <person name="Nakamura Y."/>
            <person name="Kaneko T."/>
            <person name="Katoh T."/>
            <person name="Asamizu E."/>
            <person name="Tabata S."/>
        </authorList>
    </citation>
    <scope>NUCLEOTIDE SEQUENCE [LARGE SCALE GENOMIC DNA]</scope>
    <source>
        <strain>cv. Columbia</strain>
    </source>
</reference>
<reference key="2">
    <citation type="journal article" date="2017" name="Plant J.">
        <title>Araport11: a complete reannotation of the Arabidopsis thaliana reference genome.</title>
        <authorList>
            <person name="Cheng C.Y."/>
            <person name="Krishnakumar V."/>
            <person name="Chan A.P."/>
            <person name="Thibaud-Nissen F."/>
            <person name="Schobel S."/>
            <person name="Town C.D."/>
        </authorList>
    </citation>
    <scope>GENOME REANNOTATION</scope>
    <source>
        <strain>cv. Columbia</strain>
    </source>
</reference>
<reference key="3">
    <citation type="journal article" date="2001" name="Plant Physiol.">
        <title>A superfamily of proteins with novel cysteine-rich repeats.</title>
        <authorList>
            <person name="Chen Z."/>
        </authorList>
    </citation>
    <scope>GENE FAMILY ORGANIZATION</scope>
    <scope>NOMENCLATURE</scope>
</reference>